<proteinExistence type="inferred from homology"/>
<evidence type="ECO:0000250" key="1"/>
<evidence type="ECO:0000255" key="2">
    <source>
        <dbReference type="HAMAP-Rule" id="MF_00118"/>
    </source>
</evidence>
<evidence type="ECO:0000305" key="3"/>
<sequence length="407" mass="44252">MAREKFERSKPHVNIGTIGHVDHGKTTLTAAISATLAVYSGSKKDISLIDSAPEEKARGITINTAHVEYETETRHYAHVDCPGHADYVKNMITGAAQMDGGILVVSAADGPMPQTREHILLAKQVGVPHLVVFLNKADQVDDEELLELVELEVQELLENYDFPGDDIPFVSGSALLALQAVEGGPKAKGDDKWVDRIFDLMESVDNYIPAPERDTEKTFLMAVEDVFSITGRGTVATGRIERGILKIGDTIEIVGLKDTQTTTVTGIEMFQKTLDEGMAGDNVGILIRGVQKTDIERGMVLAQPGTISPHKKFEAEVYVLGKDEGGRHTPFFTGYRPQFYVRTIDVTGTIVQFTGDDGSAAEMVMPGDRIKMTAELINPIAIEQGMRFAIREGGRTVGAGVVSKILE</sequence>
<keyword id="KW-0150">Chloroplast</keyword>
<keyword id="KW-0251">Elongation factor</keyword>
<keyword id="KW-0342">GTP-binding</keyword>
<keyword id="KW-0378">Hydrolase</keyword>
<keyword id="KW-0460">Magnesium</keyword>
<keyword id="KW-0479">Metal-binding</keyword>
<keyword id="KW-0547">Nucleotide-binding</keyword>
<keyword id="KW-0934">Plastid</keyword>
<keyword id="KW-0648">Protein biosynthesis</keyword>
<comment type="function">
    <text evidence="2">GTP hydrolase that promotes the GTP-dependent binding of aminoacyl-tRNA to the A-site of ribosomes during protein biosynthesis.</text>
</comment>
<comment type="catalytic activity">
    <reaction evidence="2">
        <text>GTP + H2O = GDP + phosphate + H(+)</text>
        <dbReference type="Rhea" id="RHEA:19669"/>
        <dbReference type="ChEBI" id="CHEBI:15377"/>
        <dbReference type="ChEBI" id="CHEBI:15378"/>
        <dbReference type="ChEBI" id="CHEBI:37565"/>
        <dbReference type="ChEBI" id="CHEBI:43474"/>
        <dbReference type="ChEBI" id="CHEBI:58189"/>
        <dbReference type="EC" id="3.6.5.3"/>
    </reaction>
    <physiologicalReaction direction="left-to-right" evidence="2">
        <dbReference type="Rhea" id="RHEA:19670"/>
    </physiologicalReaction>
</comment>
<comment type="subcellular location">
    <subcellularLocation>
        <location>Plastid</location>
        <location>Chloroplast</location>
    </subcellularLocation>
</comment>
<comment type="similarity">
    <text evidence="3">Belongs to the TRAFAC class translation factor GTPase superfamily. Classic translation factor GTPase family. EF-Tu/EF-1A subfamily.</text>
</comment>
<feature type="chain" id="PRO_0000275385" description="Elongation factor Tu, chloroplastic">
    <location>
        <begin position="1"/>
        <end position="407"/>
    </location>
</feature>
<feature type="domain" description="tr-type G">
    <location>
        <begin position="10"/>
        <end position="212"/>
    </location>
</feature>
<feature type="region of interest" description="G1" evidence="1">
    <location>
        <begin position="19"/>
        <end position="26"/>
    </location>
</feature>
<feature type="region of interest" description="G2" evidence="1">
    <location>
        <begin position="59"/>
        <end position="63"/>
    </location>
</feature>
<feature type="region of interest" description="G3" evidence="1">
    <location>
        <begin position="80"/>
        <end position="83"/>
    </location>
</feature>
<feature type="region of interest" description="G4" evidence="1">
    <location>
        <begin position="135"/>
        <end position="138"/>
    </location>
</feature>
<feature type="region of interest" description="G5" evidence="1">
    <location>
        <begin position="173"/>
        <end position="175"/>
    </location>
</feature>
<feature type="binding site" evidence="1">
    <location>
        <begin position="19"/>
        <end position="26"/>
    </location>
    <ligand>
        <name>GTP</name>
        <dbReference type="ChEBI" id="CHEBI:37565"/>
    </ligand>
</feature>
<feature type="binding site" evidence="2">
    <location>
        <position position="26"/>
    </location>
    <ligand>
        <name>Mg(2+)</name>
        <dbReference type="ChEBI" id="CHEBI:18420"/>
    </ligand>
</feature>
<feature type="binding site" evidence="1">
    <location>
        <begin position="80"/>
        <end position="84"/>
    </location>
    <ligand>
        <name>GTP</name>
        <dbReference type="ChEBI" id="CHEBI:37565"/>
    </ligand>
</feature>
<feature type="binding site" evidence="1">
    <location>
        <begin position="135"/>
        <end position="138"/>
    </location>
    <ligand>
        <name>GTP</name>
        <dbReference type="ChEBI" id="CHEBI:37565"/>
    </ligand>
</feature>
<reference key="1">
    <citation type="journal article" date="2005" name="DNA Res.">
        <title>The complete plastid genome sequence of the haptophyte Emiliania huxleyi: a comparison to other plastid genomes.</title>
        <authorList>
            <person name="Sanchez-Puerta M.V."/>
            <person name="Bachvaroff T.R."/>
            <person name="Delwiche C.F."/>
        </authorList>
    </citation>
    <scope>NUCLEOTIDE SEQUENCE [LARGE SCALE GENOMIC DNA]</scope>
    <source>
        <strain>CCMP373 / CSIRO-CS-57 / BT6</strain>
    </source>
</reference>
<dbReference type="EC" id="3.6.5.3" evidence="2"/>
<dbReference type="EMBL" id="AY741371">
    <property type="protein sequence ID" value="AAX13924.1"/>
    <property type="molecule type" value="Genomic_DNA"/>
</dbReference>
<dbReference type="RefSeq" id="YP_277425.1">
    <property type="nucleotide sequence ID" value="NC_007288.1"/>
</dbReference>
<dbReference type="SMR" id="Q4G342"/>
<dbReference type="STRING" id="2903.Q4G342"/>
<dbReference type="GeneID" id="3562528"/>
<dbReference type="GO" id="GO:0009507">
    <property type="term" value="C:chloroplast"/>
    <property type="evidence" value="ECO:0007669"/>
    <property type="project" value="UniProtKB-SubCell"/>
</dbReference>
<dbReference type="GO" id="GO:0005829">
    <property type="term" value="C:cytosol"/>
    <property type="evidence" value="ECO:0007669"/>
    <property type="project" value="TreeGrafter"/>
</dbReference>
<dbReference type="GO" id="GO:0005525">
    <property type="term" value="F:GTP binding"/>
    <property type="evidence" value="ECO:0007669"/>
    <property type="project" value="UniProtKB-UniRule"/>
</dbReference>
<dbReference type="GO" id="GO:0003924">
    <property type="term" value="F:GTPase activity"/>
    <property type="evidence" value="ECO:0007669"/>
    <property type="project" value="InterPro"/>
</dbReference>
<dbReference type="GO" id="GO:0003746">
    <property type="term" value="F:translation elongation factor activity"/>
    <property type="evidence" value="ECO:0007669"/>
    <property type="project" value="UniProtKB-UniRule"/>
</dbReference>
<dbReference type="CDD" id="cd01884">
    <property type="entry name" value="EF_Tu"/>
    <property type="match status" value="1"/>
</dbReference>
<dbReference type="CDD" id="cd03697">
    <property type="entry name" value="EFTU_II"/>
    <property type="match status" value="1"/>
</dbReference>
<dbReference type="CDD" id="cd03707">
    <property type="entry name" value="EFTU_III"/>
    <property type="match status" value="1"/>
</dbReference>
<dbReference type="FunFam" id="2.40.30.10:FF:000001">
    <property type="entry name" value="Elongation factor Tu"/>
    <property type="match status" value="1"/>
</dbReference>
<dbReference type="FunFam" id="2.40.30.10:FF:000046">
    <property type="entry name" value="Elongation factor Tu"/>
    <property type="match status" value="1"/>
</dbReference>
<dbReference type="FunFam" id="3.40.50.300:FF:000003">
    <property type="entry name" value="Elongation factor Tu"/>
    <property type="match status" value="1"/>
</dbReference>
<dbReference type="Gene3D" id="3.40.50.300">
    <property type="entry name" value="P-loop containing nucleotide triphosphate hydrolases"/>
    <property type="match status" value="1"/>
</dbReference>
<dbReference type="Gene3D" id="2.40.30.10">
    <property type="entry name" value="Translation factors"/>
    <property type="match status" value="2"/>
</dbReference>
<dbReference type="HAMAP" id="MF_00118_B">
    <property type="entry name" value="EF_Tu_B"/>
    <property type="match status" value="1"/>
</dbReference>
<dbReference type="InterPro" id="IPR041709">
    <property type="entry name" value="EF-Tu_GTP-bd"/>
</dbReference>
<dbReference type="InterPro" id="IPR050055">
    <property type="entry name" value="EF-Tu_GTPase"/>
</dbReference>
<dbReference type="InterPro" id="IPR004161">
    <property type="entry name" value="EFTu-like_2"/>
</dbReference>
<dbReference type="InterPro" id="IPR033720">
    <property type="entry name" value="EFTU_2"/>
</dbReference>
<dbReference type="InterPro" id="IPR031157">
    <property type="entry name" value="G_TR_CS"/>
</dbReference>
<dbReference type="InterPro" id="IPR027417">
    <property type="entry name" value="P-loop_NTPase"/>
</dbReference>
<dbReference type="InterPro" id="IPR005225">
    <property type="entry name" value="Small_GTP-bd"/>
</dbReference>
<dbReference type="InterPro" id="IPR000795">
    <property type="entry name" value="T_Tr_GTP-bd_dom"/>
</dbReference>
<dbReference type="InterPro" id="IPR009000">
    <property type="entry name" value="Transl_B-barrel_sf"/>
</dbReference>
<dbReference type="InterPro" id="IPR009001">
    <property type="entry name" value="Transl_elong_EF1A/Init_IF2_C"/>
</dbReference>
<dbReference type="InterPro" id="IPR004541">
    <property type="entry name" value="Transl_elong_EFTu/EF1A_bac/org"/>
</dbReference>
<dbReference type="InterPro" id="IPR004160">
    <property type="entry name" value="Transl_elong_EFTu/EF1A_C"/>
</dbReference>
<dbReference type="NCBIfam" id="TIGR00485">
    <property type="entry name" value="EF-Tu"/>
    <property type="match status" value="1"/>
</dbReference>
<dbReference type="NCBIfam" id="NF000766">
    <property type="entry name" value="PRK00049.1"/>
    <property type="match status" value="1"/>
</dbReference>
<dbReference type="NCBIfam" id="NF009372">
    <property type="entry name" value="PRK12735.1"/>
    <property type="match status" value="1"/>
</dbReference>
<dbReference type="NCBIfam" id="NF009373">
    <property type="entry name" value="PRK12736.1"/>
    <property type="match status" value="1"/>
</dbReference>
<dbReference type="NCBIfam" id="TIGR00231">
    <property type="entry name" value="small_GTP"/>
    <property type="match status" value="1"/>
</dbReference>
<dbReference type="PANTHER" id="PTHR43721:SF22">
    <property type="entry name" value="ELONGATION FACTOR TU, MITOCHONDRIAL"/>
    <property type="match status" value="1"/>
</dbReference>
<dbReference type="PANTHER" id="PTHR43721">
    <property type="entry name" value="ELONGATION FACTOR TU-RELATED"/>
    <property type="match status" value="1"/>
</dbReference>
<dbReference type="Pfam" id="PF00009">
    <property type="entry name" value="GTP_EFTU"/>
    <property type="match status" value="1"/>
</dbReference>
<dbReference type="Pfam" id="PF03144">
    <property type="entry name" value="GTP_EFTU_D2"/>
    <property type="match status" value="1"/>
</dbReference>
<dbReference type="Pfam" id="PF03143">
    <property type="entry name" value="GTP_EFTU_D3"/>
    <property type="match status" value="1"/>
</dbReference>
<dbReference type="PRINTS" id="PR00315">
    <property type="entry name" value="ELONGATNFCT"/>
</dbReference>
<dbReference type="SUPFAM" id="SSF50465">
    <property type="entry name" value="EF-Tu/eEF-1alpha/eIF2-gamma C-terminal domain"/>
    <property type="match status" value="1"/>
</dbReference>
<dbReference type="SUPFAM" id="SSF52540">
    <property type="entry name" value="P-loop containing nucleoside triphosphate hydrolases"/>
    <property type="match status" value="1"/>
</dbReference>
<dbReference type="SUPFAM" id="SSF50447">
    <property type="entry name" value="Translation proteins"/>
    <property type="match status" value="1"/>
</dbReference>
<dbReference type="PROSITE" id="PS00301">
    <property type="entry name" value="G_TR_1"/>
    <property type="match status" value="1"/>
</dbReference>
<dbReference type="PROSITE" id="PS51722">
    <property type="entry name" value="G_TR_2"/>
    <property type="match status" value="1"/>
</dbReference>
<protein>
    <recommendedName>
        <fullName>Elongation factor Tu, chloroplastic</fullName>
        <shortName>EF-Tu</shortName>
        <ecNumber evidence="2">3.6.5.3</ecNumber>
    </recommendedName>
</protein>
<geneLocation type="chloroplast"/>
<gene>
    <name type="primary">tufA</name>
</gene>
<organism>
    <name type="scientific">Emiliania huxleyi</name>
    <name type="common">Coccolithophore</name>
    <name type="synonym">Pontosphaera huxleyi</name>
    <dbReference type="NCBI Taxonomy" id="2903"/>
    <lineage>
        <taxon>Eukaryota</taxon>
        <taxon>Haptista</taxon>
        <taxon>Haptophyta</taxon>
        <taxon>Prymnesiophyceae</taxon>
        <taxon>Isochrysidales</taxon>
        <taxon>Noelaerhabdaceae</taxon>
        <taxon>Emiliania</taxon>
    </lineage>
</organism>
<name>EFTU_EMIHU</name>
<accession>Q4G342</accession>